<evidence type="ECO:0000255" key="1">
    <source>
        <dbReference type="PROSITE-ProRule" id="PRU00042"/>
    </source>
</evidence>
<evidence type="ECO:0000255" key="2">
    <source>
        <dbReference type="PROSITE-ProRule" id="PRU00119"/>
    </source>
</evidence>
<evidence type="ECO:0000269" key="3">
    <source>
    </source>
</evidence>
<evidence type="ECO:0000305" key="4"/>
<reference key="1">
    <citation type="journal article" date="2004" name="Genome Res.">
        <title>The status, quality, and expansion of the NIH full-length cDNA project: the Mammalian Gene Collection (MGC).</title>
        <authorList>
            <consortium name="The MGC Project Team"/>
        </authorList>
    </citation>
    <scope>NUCLEOTIDE SEQUENCE [LARGE SCALE MRNA]</scope>
</reference>
<reference key="2">
    <citation type="journal article" date="2004" name="Nat. Genet.">
        <title>Complete sequencing and characterization of 21,243 full-length human cDNAs.</title>
        <authorList>
            <person name="Ota T."/>
            <person name="Suzuki Y."/>
            <person name="Nishikawa T."/>
            <person name="Otsuki T."/>
            <person name="Sugiyama T."/>
            <person name="Irie R."/>
            <person name="Wakamatsu A."/>
            <person name="Hayashi K."/>
            <person name="Sato H."/>
            <person name="Nagai K."/>
            <person name="Kimura K."/>
            <person name="Makita H."/>
            <person name="Sekine M."/>
            <person name="Obayashi M."/>
            <person name="Nishi T."/>
            <person name="Shibahara T."/>
            <person name="Tanaka T."/>
            <person name="Ishii S."/>
            <person name="Yamamoto J."/>
            <person name="Saito K."/>
            <person name="Kawai Y."/>
            <person name="Isono Y."/>
            <person name="Nakamura Y."/>
            <person name="Nagahari K."/>
            <person name="Murakami K."/>
            <person name="Yasuda T."/>
            <person name="Iwayanagi T."/>
            <person name="Wagatsuma M."/>
            <person name="Shiratori A."/>
            <person name="Sudo H."/>
            <person name="Hosoiri T."/>
            <person name="Kaku Y."/>
            <person name="Kodaira H."/>
            <person name="Kondo H."/>
            <person name="Sugawara M."/>
            <person name="Takahashi M."/>
            <person name="Kanda K."/>
            <person name="Yokoi T."/>
            <person name="Furuya T."/>
            <person name="Kikkawa E."/>
            <person name="Omura Y."/>
            <person name="Abe K."/>
            <person name="Kamihara K."/>
            <person name="Katsuta N."/>
            <person name="Sato K."/>
            <person name="Tanikawa M."/>
            <person name="Yamazaki M."/>
            <person name="Ninomiya K."/>
            <person name="Ishibashi T."/>
            <person name="Yamashita H."/>
            <person name="Murakawa K."/>
            <person name="Fujimori K."/>
            <person name="Tanai H."/>
            <person name="Kimata M."/>
            <person name="Watanabe M."/>
            <person name="Hiraoka S."/>
            <person name="Chiba Y."/>
            <person name="Ishida S."/>
            <person name="Ono Y."/>
            <person name="Takiguchi S."/>
            <person name="Watanabe S."/>
            <person name="Yosida M."/>
            <person name="Hotuta T."/>
            <person name="Kusano J."/>
            <person name="Kanehori K."/>
            <person name="Takahashi-Fujii A."/>
            <person name="Hara H."/>
            <person name="Tanase T.-O."/>
            <person name="Nomura Y."/>
            <person name="Togiya S."/>
            <person name="Komai F."/>
            <person name="Hara R."/>
            <person name="Takeuchi K."/>
            <person name="Arita M."/>
            <person name="Imose N."/>
            <person name="Musashino K."/>
            <person name="Yuuki H."/>
            <person name="Oshima A."/>
            <person name="Sasaki N."/>
            <person name="Aotsuka S."/>
            <person name="Yoshikawa Y."/>
            <person name="Matsunawa H."/>
            <person name="Ichihara T."/>
            <person name="Shiohata N."/>
            <person name="Sano S."/>
            <person name="Moriya S."/>
            <person name="Momiyama H."/>
            <person name="Satoh N."/>
            <person name="Takami S."/>
            <person name="Terashima Y."/>
            <person name="Suzuki O."/>
            <person name="Nakagawa S."/>
            <person name="Senoh A."/>
            <person name="Mizoguchi H."/>
            <person name="Goto Y."/>
            <person name="Shimizu F."/>
            <person name="Wakebe H."/>
            <person name="Hishigaki H."/>
            <person name="Watanabe T."/>
            <person name="Sugiyama A."/>
            <person name="Takemoto M."/>
            <person name="Kawakami B."/>
            <person name="Yamazaki M."/>
            <person name="Watanabe K."/>
            <person name="Kumagai A."/>
            <person name="Itakura S."/>
            <person name="Fukuzumi Y."/>
            <person name="Fujimori Y."/>
            <person name="Komiyama M."/>
            <person name="Tashiro H."/>
            <person name="Tanigami A."/>
            <person name="Fujiwara T."/>
            <person name="Ono T."/>
            <person name="Yamada K."/>
            <person name="Fujii Y."/>
            <person name="Ozaki K."/>
            <person name="Hirao M."/>
            <person name="Ohmori Y."/>
            <person name="Kawabata A."/>
            <person name="Hikiji T."/>
            <person name="Kobatake N."/>
            <person name="Inagaki H."/>
            <person name="Ikema Y."/>
            <person name="Okamoto S."/>
            <person name="Okitani R."/>
            <person name="Kawakami T."/>
            <person name="Noguchi S."/>
            <person name="Itoh T."/>
            <person name="Shigeta K."/>
            <person name="Senba T."/>
            <person name="Matsumura K."/>
            <person name="Nakajima Y."/>
            <person name="Mizuno T."/>
            <person name="Morinaga M."/>
            <person name="Sasaki M."/>
            <person name="Togashi T."/>
            <person name="Oyama M."/>
            <person name="Hata H."/>
            <person name="Watanabe M."/>
            <person name="Komatsu T."/>
            <person name="Mizushima-Sugano J."/>
            <person name="Satoh T."/>
            <person name="Shirai Y."/>
            <person name="Takahashi Y."/>
            <person name="Nakagawa K."/>
            <person name="Okumura K."/>
            <person name="Nagase T."/>
            <person name="Nomura N."/>
            <person name="Kikuchi H."/>
            <person name="Masuho Y."/>
            <person name="Yamashita R."/>
            <person name="Nakai K."/>
            <person name="Yada T."/>
            <person name="Nakamura Y."/>
            <person name="Ohara O."/>
            <person name="Isogai T."/>
            <person name="Sugano S."/>
        </authorList>
    </citation>
    <scope>NUCLEOTIDE SEQUENCE [LARGE SCALE MRNA] OF 41-642</scope>
</reference>
<reference key="3">
    <citation type="journal article" date="2021" name="Genet. Med.">
        <title>Combining exome/genome sequencing with data repository analysis reveals novel gene-disease associations for a wide range of genetic disorders.</title>
        <authorList>
            <person name="Bertoli-Avella A.M."/>
            <person name="Kandaswamy K.K."/>
            <person name="Khan S."/>
            <person name="Ordonez-Herrera N."/>
            <person name="Tripolszki K."/>
            <person name="Beetz C."/>
            <person name="Rocha M.E."/>
            <person name="Urzi A."/>
            <person name="Hotakainen R."/>
            <person name="Leubauer A."/>
            <person name="Al-Ali R."/>
            <person name="Karageorgou V."/>
            <person name="Moldovan O."/>
            <person name="Dias P."/>
            <person name="Alhashem A."/>
            <person name="Tabarki B."/>
            <person name="Albalwi M.A."/>
            <person name="Alswaid A.F."/>
            <person name="Al-Hassnan Z.N."/>
            <person name="Alghamdi M.A."/>
            <person name="Hadipour Z."/>
            <person name="Hadipour F."/>
            <person name="Al Hashmi N."/>
            <person name="Al-Gazali L."/>
            <person name="Cheema H."/>
            <person name="Zaki M.S."/>
            <person name="Huening I."/>
            <person name="Alfares A."/>
            <person name="Eyaid W."/>
            <person name="Al Mutairi F."/>
            <person name="Alfadhel M."/>
            <person name="Alkuraya F.S."/>
            <person name="Al-Sannaa N.A."/>
            <person name="AlShamsi A.M."/>
            <person name="Ameziane N."/>
            <person name="Rolfs A."/>
            <person name="Bauer P."/>
        </authorList>
    </citation>
    <scope>INVOLVEMENT IN DEGCAGS</scope>
</reference>
<protein>
    <recommendedName>
        <fullName>Zinc finger protein 699</fullName>
    </recommendedName>
    <alternativeName>
        <fullName>Hangover homolog</fullName>
    </alternativeName>
</protein>
<accession>Q32M78</accession>
<accession>Q8N9A1</accession>
<dbReference type="EMBL" id="BC109267">
    <property type="protein sequence ID" value="AAI09268.1"/>
    <property type="molecule type" value="mRNA"/>
</dbReference>
<dbReference type="EMBL" id="BC109268">
    <property type="protein sequence ID" value="AAI09269.1"/>
    <property type="molecule type" value="mRNA"/>
</dbReference>
<dbReference type="EMBL" id="AK095463">
    <property type="protein sequence ID" value="BAC04552.1"/>
    <property type="status" value="ALT_INIT"/>
    <property type="molecule type" value="mRNA"/>
</dbReference>
<dbReference type="CCDS" id="CCDS42495.1"/>
<dbReference type="RefSeq" id="NP_940937.1">
    <property type="nucleotide sequence ID" value="NM_198535.3"/>
</dbReference>
<dbReference type="SMR" id="Q32M78"/>
<dbReference type="BioGRID" id="131929">
    <property type="interactions" value="16"/>
</dbReference>
<dbReference type="FunCoup" id="Q32M78">
    <property type="interactions" value="18"/>
</dbReference>
<dbReference type="IntAct" id="Q32M78">
    <property type="interactions" value="10"/>
</dbReference>
<dbReference type="STRING" id="9606.ENSP00000467723"/>
<dbReference type="iPTMnet" id="Q32M78"/>
<dbReference type="PhosphoSitePlus" id="Q32M78"/>
<dbReference type="BioMuta" id="ZNF699"/>
<dbReference type="DMDM" id="94730691"/>
<dbReference type="jPOST" id="Q32M78"/>
<dbReference type="MassIVE" id="Q32M78"/>
<dbReference type="PaxDb" id="9606-ENSP00000467723"/>
<dbReference type="PeptideAtlas" id="Q32M78"/>
<dbReference type="ProteomicsDB" id="61593"/>
<dbReference type="Antibodypedia" id="25020">
    <property type="antibodies" value="82 antibodies from 20 providers"/>
</dbReference>
<dbReference type="DNASU" id="374879"/>
<dbReference type="Ensembl" id="ENST00000308650.4">
    <property type="protein sequence ID" value="ENSP00000311596.3"/>
    <property type="gene ID" value="ENSG00000196110.8"/>
</dbReference>
<dbReference type="Ensembl" id="ENST00000591998.6">
    <property type="protein sequence ID" value="ENSP00000467723.1"/>
    <property type="gene ID" value="ENSG00000196110.8"/>
</dbReference>
<dbReference type="GeneID" id="374879"/>
<dbReference type="KEGG" id="hsa:374879"/>
<dbReference type="MANE-Select" id="ENST00000591998.6">
    <property type="protein sequence ID" value="ENSP00000467723.1"/>
    <property type="RefSeq nucleotide sequence ID" value="NM_198535.3"/>
    <property type="RefSeq protein sequence ID" value="NP_940937.1"/>
</dbReference>
<dbReference type="UCSC" id="uc002mlc.1">
    <property type="organism name" value="human"/>
</dbReference>
<dbReference type="AGR" id="HGNC:24750"/>
<dbReference type="CTD" id="374879"/>
<dbReference type="DisGeNET" id="374879"/>
<dbReference type="GeneCards" id="ZNF699"/>
<dbReference type="HGNC" id="HGNC:24750">
    <property type="gene designation" value="ZNF699"/>
</dbReference>
<dbReference type="HPA" id="ENSG00000196110">
    <property type="expression patterns" value="Low tissue specificity"/>
</dbReference>
<dbReference type="MalaCards" id="ZNF699"/>
<dbReference type="MIM" id="609571">
    <property type="type" value="gene"/>
</dbReference>
<dbReference type="MIM" id="619488">
    <property type="type" value="phenotype"/>
</dbReference>
<dbReference type="neXtProt" id="NX_Q32M78"/>
<dbReference type="OpenTargets" id="ENSG00000196110"/>
<dbReference type="Orphanet" id="528084">
    <property type="disease" value="Non-specific syndromic intellectual disability"/>
</dbReference>
<dbReference type="PharmGKB" id="PA142670496"/>
<dbReference type="VEuPathDB" id="HostDB:ENSG00000196110"/>
<dbReference type="eggNOG" id="KOG1721">
    <property type="taxonomic scope" value="Eukaryota"/>
</dbReference>
<dbReference type="GeneTree" id="ENSGT00940000163210"/>
<dbReference type="HOGENOM" id="CLU_002678_17_1_1"/>
<dbReference type="InParanoid" id="Q32M78"/>
<dbReference type="OMA" id="NQHGQTF"/>
<dbReference type="OrthoDB" id="6077919at2759"/>
<dbReference type="PAN-GO" id="Q32M78">
    <property type="GO annotations" value="4 GO annotations based on evolutionary models"/>
</dbReference>
<dbReference type="PhylomeDB" id="Q32M78"/>
<dbReference type="PathwayCommons" id="Q32M78"/>
<dbReference type="Reactome" id="R-HSA-212436">
    <property type="pathway name" value="Generic Transcription Pathway"/>
</dbReference>
<dbReference type="SignaLink" id="Q32M78"/>
<dbReference type="BioGRID-ORCS" id="374879">
    <property type="hits" value="20 hits in 1179 CRISPR screens"/>
</dbReference>
<dbReference type="ChiTaRS" id="ZNF699">
    <property type="organism name" value="human"/>
</dbReference>
<dbReference type="GenomeRNAi" id="374879"/>
<dbReference type="Pharos" id="Q32M78">
    <property type="development level" value="Tbio"/>
</dbReference>
<dbReference type="PRO" id="PR:Q32M78"/>
<dbReference type="Proteomes" id="UP000005640">
    <property type="component" value="Chromosome 19"/>
</dbReference>
<dbReference type="RNAct" id="Q32M78">
    <property type="molecule type" value="protein"/>
</dbReference>
<dbReference type="Bgee" id="ENSG00000196110">
    <property type="expression patterns" value="Expressed in calcaneal tendon and 106 other cell types or tissues"/>
</dbReference>
<dbReference type="GO" id="GO:0005634">
    <property type="term" value="C:nucleus"/>
    <property type="evidence" value="ECO:0000318"/>
    <property type="project" value="GO_Central"/>
</dbReference>
<dbReference type="GO" id="GO:0000981">
    <property type="term" value="F:DNA-binding transcription factor activity, RNA polymerase II-specific"/>
    <property type="evidence" value="ECO:0000318"/>
    <property type="project" value="GO_Central"/>
</dbReference>
<dbReference type="GO" id="GO:0000978">
    <property type="term" value="F:RNA polymerase II cis-regulatory region sequence-specific DNA binding"/>
    <property type="evidence" value="ECO:0000318"/>
    <property type="project" value="GO_Central"/>
</dbReference>
<dbReference type="GO" id="GO:0008270">
    <property type="term" value="F:zinc ion binding"/>
    <property type="evidence" value="ECO:0007669"/>
    <property type="project" value="UniProtKB-KW"/>
</dbReference>
<dbReference type="GO" id="GO:0006357">
    <property type="term" value="P:regulation of transcription by RNA polymerase II"/>
    <property type="evidence" value="ECO:0000318"/>
    <property type="project" value="GO_Central"/>
</dbReference>
<dbReference type="CDD" id="cd07765">
    <property type="entry name" value="KRAB_A-box"/>
    <property type="match status" value="1"/>
</dbReference>
<dbReference type="FunFam" id="3.30.160.60:FF:000446">
    <property type="entry name" value="Zinc finger protein"/>
    <property type="match status" value="1"/>
</dbReference>
<dbReference type="FunFam" id="3.30.160.60:FF:000204">
    <property type="entry name" value="Zinc finger protein 331"/>
    <property type="match status" value="1"/>
</dbReference>
<dbReference type="FunFam" id="3.30.160.60:FF:002344">
    <property type="entry name" value="Zinc finger protein 333"/>
    <property type="match status" value="1"/>
</dbReference>
<dbReference type="FunFam" id="3.30.160.60:FF:000338">
    <property type="entry name" value="zinc finger protein 383"/>
    <property type="match status" value="1"/>
</dbReference>
<dbReference type="FunFam" id="3.30.160.60:FF:001498">
    <property type="entry name" value="Zinc finger protein 404"/>
    <property type="match status" value="1"/>
</dbReference>
<dbReference type="FunFam" id="3.30.160.60:FF:002254">
    <property type="entry name" value="Zinc finger protein 540"/>
    <property type="match status" value="3"/>
</dbReference>
<dbReference type="FunFam" id="3.30.160.60:FF:000371">
    <property type="entry name" value="Zinc finger protein 555"/>
    <property type="match status" value="2"/>
</dbReference>
<dbReference type="FunFam" id="3.30.160.60:FF:000564">
    <property type="entry name" value="zinc finger protein 699"/>
    <property type="match status" value="2"/>
</dbReference>
<dbReference type="FunFam" id="3.30.160.60:FF:000113">
    <property type="entry name" value="zinc finger protein 699 isoform X1"/>
    <property type="match status" value="1"/>
</dbReference>
<dbReference type="FunFam" id="3.30.160.60:FF:001470">
    <property type="entry name" value="zinc finger protein 699 isoform X2"/>
    <property type="match status" value="1"/>
</dbReference>
<dbReference type="FunFam" id="3.30.160.60:FF:000099">
    <property type="entry name" value="Zinc finger protein 79"/>
    <property type="match status" value="2"/>
</dbReference>
<dbReference type="Gene3D" id="6.10.140.140">
    <property type="match status" value="1"/>
</dbReference>
<dbReference type="Gene3D" id="3.30.160.60">
    <property type="entry name" value="Classic Zinc Finger"/>
    <property type="match status" value="16"/>
</dbReference>
<dbReference type="InterPro" id="IPR001909">
    <property type="entry name" value="KRAB"/>
</dbReference>
<dbReference type="InterPro" id="IPR036051">
    <property type="entry name" value="KRAB_dom_sf"/>
</dbReference>
<dbReference type="InterPro" id="IPR036236">
    <property type="entry name" value="Znf_C2H2_sf"/>
</dbReference>
<dbReference type="InterPro" id="IPR013087">
    <property type="entry name" value="Znf_C2H2_type"/>
</dbReference>
<dbReference type="PANTHER" id="PTHR24376">
    <property type="entry name" value="ZINC FINGER PROTEIN"/>
    <property type="match status" value="1"/>
</dbReference>
<dbReference type="PANTHER" id="PTHR24376:SF238">
    <property type="entry name" value="ZINC FINGER PROTEIN 850"/>
    <property type="match status" value="1"/>
</dbReference>
<dbReference type="Pfam" id="PF01352">
    <property type="entry name" value="KRAB"/>
    <property type="match status" value="1"/>
</dbReference>
<dbReference type="Pfam" id="PF00096">
    <property type="entry name" value="zf-C2H2"/>
    <property type="match status" value="12"/>
</dbReference>
<dbReference type="Pfam" id="PF13894">
    <property type="entry name" value="zf-C2H2_4"/>
    <property type="match status" value="1"/>
</dbReference>
<dbReference type="SMART" id="SM00349">
    <property type="entry name" value="KRAB"/>
    <property type="match status" value="1"/>
</dbReference>
<dbReference type="SMART" id="SM00355">
    <property type="entry name" value="ZnF_C2H2"/>
    <property type="match status" value="16"/>
</dbReference>
<dbReference type="SUPFAM" id="SSF57667">
    <property type="entry name" value="beta-beta-alpha zinc fingers"/>
    <property type="match status" value="8"/>
</dbReference>
<dbReference type="SUPFAM" id="SSF109640">
    <property type="entry name" value="KRAB domain (Kruppel-associated box)"/>
    <property type="match status" value="1"/>
</dbReference>
<dbReference type="PROSITE" id="PS50805">
    <property type="entry name" value="KRAB"/>
    <property type="match status" value="1"/>
</dbReference>
<dbReference type="PROSITE" id="PS00028">
    <property type="entry name" value="ZINC_FINGER_C2H2_1"/>
    <property type="match status" value="14"/>
</dbReference>
<dbReference type="PROSITE" id="PS50157">
    <property type="entry name" value="ZINC_FINGER_C2H2_2"/>
    <property type="match status" value="16"/>
</dbReference>
<gene>
    <name type="primary">ZNF699</name>
</gene>
<sequence length="642" mass="73956">MEEERKTAELQKNRIQDSVVFEDVAVDFTQEEWALLDLAQRNLYRDVMLENFQNLASLGYPLHTPHLISQWEQEEDLQTVKRELIQGIFMGEHREGFETQLKTNESVASQDICGEKISNEQKIVRFKRNDSWFSSLHENQESCGIDYQNKSHERHLRNHMVENIYECYEENQDGQTFSQVPNLDSLKRNTEVKSCECHECGKAFVDHSSLKSHIRSHTGSKPYQCKECGKAFHFLACFKKHMKTPTEEKPYECKECTKAFSCSSFFRAHMKIHIGKTNYECKECGKGFSCSSSLTEHKRIHSGDKPYECKECGKAFSCSSSLSKHKRIHSGDKPYECKECGKAFSSSSHLIIHIRIHTGEKPYECKECGKAFSESSKLTVHGRTHTGEKPYKCKECGKAYNCPSSLSIHMRKHTGEKPYECLECGKAFYLPTSLNTHVKNQSREKPYECKECGKAFSCPSSFRAHVRDHTGKIQYECKECGKTFSRSSSLTEHLRTHSGEKPYECKECGKAFISSSHLTVHIRTHTGEKPYECKKCGKAFIYPSALRIHMRTHTGEKPYECKECGKAFRHSSYLTVHARMHTGEKPFECLECGKAFSCPSSFRRHVRSHTGEKPYECKECGKAFVCPAYFRRHVKTHTRENI</sequence>
<name>ZN699_HUMAN</name>
<feature type="chain" id="PRO_0000233279" description="Zinc finger protein 699">
    <location>
        <begin position="1"/>
        <end position="642"/>
    </location>
</feature>
<feature type="domain" description="KRAB" evidence="2">
    <location>
        <begin position="19"/>
        <end position="90"/>
    </location>
</feature>
<feature type="zinc finger region" description="C2H2-type 1" evidence="1">
    <location>
        <begin position="195"/>
        <end position="217"/>
    </location>
</feature>
<feature type="zinc finger region" description="C2H2-type 2; degenerate" evidence="1">
    <location>
        <begin position="223"/>
        <end position="245"/>
    </location>
</feature>
<feature type="zinc finger region" description="C2H2-type 3" evidence="1">
    <location>
        <begin position="251"/>
        <end position="273"/>
    </location>
</feature>
<feature type="zinc finger region" description="C2H2-type 4" evidence="1">
    <location>
        <begin position="279"/>
        <end position="301"/>
    </location>
</feature>
<feature type="zinc finger region" description="C2H2-type 5" evidence="1">
    <location>
        <begin position="307"/>
        <end position="329"/>
    </location>
</feature>
<feature type="zinc finger region" description="C2H2-type 6" evidence="1">
    <location>
        <begin position="335"/>
        <end position="357"/>
    </location>
</feature>
<feature type="zinc finger region" description="C2H2-type 7" evidence="1">
    <location>
        <begin position="363"/>
        <end position="385"/>
    </location>
</feature>
<feature type="zinc finger region" description="C2H2-type 8" evidence="1">
    <location>
        <begin position="391"/>
        <end position="413"/>
    </location>
</feature>
<feature type="zinc finger region" description="C2H2-type 9; degenerate" evidence="1">
    <location>
        <begin position="419"/>
        <end position="441"/>
    </location>
</feature>
<feature type="zinc finger region" description="C2H2-type 10" evidence="1">
    <location>
        <begin position="447"/>
        <end position="469"/>
    </location>
</feature>
<feature type="zinc finger region" description="C2H2-type 11" evidence="1">
    <location>
        <begin position="475"/>
        <end position="497"/>
    </location>
</feature>
<feature type="zinc finger region" description="C2H2-type 12" evidence="1">
    <location>
        <begin position="503"/>
        <end position="525"/>
    </location>
</feature>
<feature type="zinc finger region" description="C2H2-type 13" evidence="1">
    <location>
        <begin position="531"/>
        <end position="553"/>
    </location>
</feature>
<feature type="zinc finger region" description="C2H2-type 14" evidence="1">
    <location>
        <begin position="559"/>
        <end position="581"/>
    </location>
</feature>
<feature type="zinc finger region" description="C2H2-type 15" evidence="1">
    <location>
        <begin position="587"/>
        <end position="609"/>
    </location>
</feature>
<feature type="zinc finger region" description="C2H2-type 16" evidence="1">
    <location>
        <begin position="615"/>
        <end position="637"/>
    </location>
</feature>
<organism>
    <name type="scientific">Homo sapiens</name>
    <name type="common">Human</name>
    <dbReference type="NCBI Taxonomy" id="9606"/>
    <lineage>
        <taxon>Eukaryota</taxon>
        <taxon>Metazoa</taxon>
        <taxon>Chordata</taxon>
        <taxon>Craniata</taxon>
        <taxon>Vertebrata</taxon>
        <taxon>Euteleostomi</taxon>
        <taxon>Mammalia</taxon>
        <taxon>Eutheria</taxon>
        <taxon>Euarchontoglires</taxon>
        <taxon>Primates</taxon>
        <taxon>Haplorrhini</taxon>
        <taxon>Catarrhini</taxon>
        <taxon>Hominidae</taxon>
        <taxon>Homo</taxon>
    </lineage>
</organism>
<proteinExistence type="evidence at protein level"/>
<keyword id="KW-0209">Deafness</keyword>
<keyword id="KW-0238">DNA-binding</keyword>
<keyword id="KW-0991">Intellectual disability</keyword>
<keyword id="KW-0479">Metal-binding</keyword>
<keyword id="KW-0539">Nucleus</keyword>
<keyword id="KW-1267">Proteomics identification</keyword>
<keyword id="KW-1185">Reference proteome</keyword>
<keyword id="KW-0677">Repeat</keyword>
<keyword id="KW-0804">Transcription</keyword>
<keyword id="KW-0805">Transcription regulation</keyword>
<keyword id="KW-0862">Zinc</keyword>
<keyword id="KW-0863">Zinc-finger</keyword>
<comment type="function">
    <text>May be involved in transcriptional regulation.</text>
</comment>
<comment type="interaction">
    <interactant intactId="EBI-10217363">
        <id>Q32M78</id>
    </interactant>
    <interactant intactId="EBI-739789">
        <id>Q92997</id>
        <label>DVL3</label>
    </interactant>
    <organismsDiffer>false</organismsDiffer>
    <experiments>3</experiments>
</comment>
<comment type="interaction">
    <interactant intactId="EBI-10217363">
        <id>Q32M78</id>
    </interactant>
    <interactant intactId="EBI-743414">
        <id>O95967</id>
        <label>EFEMP2</label>
    </interactant>
    <organismsDiffer>false</organismsDiffer>
    <experiments>3</experiments>
</comment>
<comment type="interaction">
    <interactant intactId="EBI-10217363">
        <id>Q32M78</id>
    </interactant>
    <interactant intactId="EBI-5460660">
        <id>Q96MH2</id>
        <label>HEXIM2</label>
    </interactant>
    <organismsDiffer>false</organismsDiffer>
    <experiments>3</experiments>
</comment>
<comment type="interaction">
    <interactant intactId="EBI-10217363">
        <id>Q32M78</id>
    </interactant>
    <interactant intactId="EBI-9639760">
        <id>P23327</id>
        <label>HRC</label>
    </interactant>
    <organismsDiffer>false</organismsDiffer>
    <experiments>3</experiments>
</comment>
<comment type="interaction">
    <interactant intactId="EBI-10217363">
        <id>Q32M78</id>
    </interactant>
    <interactant intactId="EBI-10172052">
        <id>P60411</id>
        <label>KRTAP10-9</label>
    </interactant>
    <organismsDiffer>false</organismsDiffer>
    <experiments>3</experiments>
</comment>
<comment type="interaction">
    <interactant intactId="EBI-10217363">
        <id>Q32M78</id>
    </interactant>
    <interactant intactId="EBI-3867173">
        <id>A7MD48</id>
        <label>SRRM4</label>
    </interactant>
    <organismsDiffer>false</organismsDiffer>
    <experiments>3</experiments>
</comment>
<comment type="subcellular location">
    <subcellularLocation>
        <location evidence="4">Nucleus</location>
    </subcellularLocation>
</comment>
<comment type="disease" evidence="3">
    <disease id="DI-06209">
        <name>DEGCAGS syndrome</name>
        <acronym>DEGCAGS</acronym>
        <description>An autosomal recessive neurodevelopmental disorder characterized by global developmental delay, coarse facial features, and abnormalities of the cardiovascular, gastrointestinal, genitourinary and skeletal system. Other common features included anemia or pancytopenia, immunodeficiency and recurrent infections, and sensorineural hearing impairment. Death in childhood may occur.</description>
        <dbReference type="MIM" id="619488"/>
    </disease>
    <text>The disease may be caused by variants affecting the gene represented in this entry.</text>
</comment>
<comment type="similarity">
    <text evidence="4">Belongs to the krueppel C2H2-type zinc-finger protein family.</text>
</comment>
<comment type="sequence caution" evidence="4">
    <conflict type="erroneous initiation">
        <sequence resource="EMBL-CDS" id="BAC04552"/>
    </conflict>
</comment>